<protein>
    <recommendedName>
        <fullName evidence="1">Ion-translocating oxidoreductase complex subunit E</fullName>
        <ecNumber evidence="1">7.-.-.-</ecNumber>
    </recommendedName>
    <alternativeName>
        <fullName evidence="1">Rsx electron transport complex subunit E</fullName>
    </alternativeName>
</protein>
<keyword id="KW-0997">Cell inner membrane</keyword>
<keyword id="KW-1003">Cell membrane</keyword>
<keyword id="KW-0249">Electron transport</keyword>
<keyword id="KW-0472">Membrane</keyword>
<keyword id="KW-1185">Reference proteome</keyword>
<keyword id="KW-1278">Translocase</keyword>
<keyword id="KW-0812">Transmembrane</keyword>
<keyword id="KW-1133">Transmembrane helix</keyword>
<keyword id="KW-0813">Transport</keyword>
<sequence>MSEIKDIVVQGLWKNNSALVQLLGLCPLLAVTSTATNALGLGLATTLVLTLTNLTVSALRRWTPAEIRIPIYVMIIASVVSAVQMLINAYAFGLYQSLGIFIPLIVTNCIVVGRAEAFAAKKGPWLSALDGFSIGMGATGAMFVLGSLREILGNGTLFDGADSLLGSWAKVLRVEIFHTDSPFLLAMLPPGAFIGLGLMLAVKYLIDEKMKKRRAVTAPSAVPAGETGKV</sequence>
<organism>
    <name type="scientific">Salmonella arizonae (strain ATCC BAA-731 / CDC346-86 / RSK2980)</name>
    <dbReference type="NCBI Taxonomy" id="41514"/>
    <lineage>
        <taxon>Bacteria</taxon>
        <taxon>Pseudomonadati</taxon>
        <taxon>Pseudomonadota</taxon>
        <taxon>Gammaproteobacteria</taxon>
        <taxon>Enterobacterales</taxon>
        <taxon>Enterobacteriaceae</taxon>
        <taxon>Salmonella</taxon>
    </lineage>
</organism>
<comment type="function">
    <text evidence="1">Part of a membrane-bound complex that couples electron transfer with translocation of ions across the membrane. Required to maintain the reduced state of SoxR.</text>
</comment>
<comment type="subunit">
    <text evidence="1">The complex is composed of six subunits: RsxA, RsxB, RsxC, RsxD, RsxE and RsxG.</text>
</comment>
<comment type="subcellular location">
    <subcellularLocation>
        <location evidence="1">Cell inner membrane</location>
        <topology evidence="1">Multi-pass membrane protein</topology>
    </subcellularLocation>
</comment>
<comment type="similarity">
    <text evidence="1">Belongs to the NqrDE/RnfAE family.</text>
</comment>
<evidence type="ECO:0000255" key="1">
    <source>
        <dbReference type="HAMAP-Rule" id="MF_00478"/>
    </source>
</evidence>
<accession>A9MEG7</accession>
<dbReference type="EC" id="7.-.-.-" evidence="1"/>
<dbReference type="EMBL" id="CP000880">
    <property type="protein sequence ID" value="ABX21424.1"/>
    <property type="molecule type" value="Genomic_DNA"/>
</dbReference>
<dbReference type="SMR" id="A9MEG7"/>
<dbReference type="STRING" id="41514.SARI_01528"/>
<dbReference type="KEGG" id="ses:SARI_01528"/>
<dbReference type="HOGENOM" id="CLU_046659_1_0_6"/>
<dbReference type="Proteomes" id="UP000002084">
    <property type="component" value="Chromosome"/>
</dbReference>
<dbReference type="GO" id="GO:0005886">
    <property type="term" value="C:plasma membrane"/>
    <property type="evidence" value="ECO:0007669"/>
    <property type="project" value="UniProtKB-SubCell"/>
</dbReference>
<dbReference type="GO" id="GO:0022900">
    <property type="term" value="P:electron transport chain"/>
    <property type="evidence" value="ECO:0007669"/>
    <property type="project" value="UniProtKB-UniRule"/>
</dbReference>
<dbReference type="HAMAP" id="MF_00478">
    <property type="entry name" value="RsxE_RnfE"/>
    <property type="match status" value="1"/>
</dbReference>
<dbReference type="InterPro" id="IPR003667">
    <property type="entry name" value="NqrDE/RnfAE"/>
</dbReference>
<dbReference type="InterPro" id="IPR010968">
    <property type="entry name" value="RnfE"/>
</dbReference>
<dbReference type="NCBIfam" id="NF009070">
    <property type="entry name" value="PRK12405.1"/>
    <property type="match status" value="1"/>
</dbReference>
<dbReference type="NCBIfam" id="TIGR01948">
    <property type="entry name" value="rnfE"/>
    <property type="match status" value="1"/>
</dbReference>
<dbReference type="PANTHER" id="PTHR30586">
    <property type="entry name" value="ELECTRON TRANSPORT COMPLEX PROTEIN RNFE"/>
    <property type="match status" value="1"/>
</dbReference>
<dbReference type="PANTHER" id="PTHR30586:SF0">
    <property type="entry name" value="ION-TRANSLOCATING OXIDOREDUCTASE COMPLEX SUBUNIT E"/>
    <property type="match status" value="1"/>
</dbReference>
<dbReference type="Pfam" id="PF02508">
    <property type="entry name" value="Rnf-Nqr"/>
    <property type="match status" value="1"/>
</dbReference>
<dbReference type="PIRSF" id="PIRSF006102">
    <property type="entry name" value="NQR_DE"/>
    <property type="match status" value="1"/>
</dbReference>
<reference key="1">
    <citation type="submission" date="2007-11" db="EMBL/GenBank/DDBJ databases">
        <authorList>
            <consortium name="The Salmonella enterica serovar Arizonae Genome Sequencing Project"/>
            <person name="McClelland M."/>
            <person name="Sanderson E.K."/>
            <person name="Porwollik S."/>
            <person name="Spieth J."/>
            <person name="Clifton W.S."/>
            <person name="Fulton R."/>
            <person name="Chunyan W."/>
            <person name="Wollam A."/>
            <person name="Shah N."/>
            <person name="Pepin K."/>
            <person name="Bhonagiri V."/>
            <person name="Nash W."/>
            <person name="Johnson M."/>
            <person name="Thiruvilangam P."/>
            <person name="Wilson R."/>
        </authorList>
    </citation>
    <scope>NUCLEOTIDE SEQUENCE [LARGE SCALE GENOMIC DNA]</scope>
    <source>
        <strain>ATCC BAA-731 / CDC346-86 / RSK2980</strain>
    </source>
</reference>
<name>RSXE_SALAR</name>
<feature type="chain" id="PRO_1000081263" description="Ion-translocating oxidoreductase complex subunit E">
    <location>
        <begin position="1"/>
        <end position="230"/>
    </location>
</feature>
<feature type="transmembrane region" description="Helical" evidence="1">
    <location>
        <begin position="18"/>
        <end position="38"/>
    </location>
</feature>
<feature type="transmembrane region" description="Helical" evidence="1">
    <location>
        <begin position="39"/>
        <end position="59"/>
    </location>
</feature>
<feature type="transmembrane region" description="Helical" evidence="1">
    <location>
        <begin position="63"/>
        <end position="83"/>
    </location>
</feature>
<feature type="transmembrane region" description="Helical" evidence="1">
    <location>
        <begin position="86"/>
        <end position="106"/>
    </location>
</feature>
<feature type="transmembrane region" description="Helical" evidence="1">
    <location>
        <begin position="125"/>
        <end position="145"/>
    </location>
</feature>
<feature type="transmembrane region" description="Helical" evidence="1">
    <location>
        <begin position="182"/>
        <end position="202"/>
    </location>
</feature>
<proteinExistence type="inferred from homology"/>
<gene>
    <name evidence="1" type="primary">rsxE</name>
    <name type="ordered locus">SARI_01528</name>
</gene>